<proteinExistence type="inferred from homology"/>
<comment type="function">
    <text evidence="1">Inhibits all the catalytic activities of DNA gyrase by preventing its interaction with DNA. Acts by binding directly to the C-terminal domain of GyrB, which probably disrupts DNA binding by the gyrase.</text>
</comment>
<comment type="cofactor">
    <cofactor evidence="1">
        <name>Zn(2+)</name>
        <dbReference type="ChEBI" id="CHEBI:29105"/>
    </cofactor>
    <text evidence="1">Binds 1 zinc ion.</text>
</comment>
<comment type="subunit">
    <text evidence="1">Interacts with GyrB.</text>
</comment>
<comment type="similarity">
    <text evidence="1">Belongs to the DNA gyrase inhibitor YacG family.</text>
</comment>
<protein>
    <recommendedName>
        <fullName evidence="1">DNA gyrase inhibitor YacG</fullName>
    </recommendedName>
</protein>
<reference key="1">
    <citation type="submission" date="2006-03" db="EMBL/GenBank/DDBJ databases">
        <title>Complete sequence of Shewanella denitrificans OS217.</title>
        <authorList>
            <consortium name="US DOE Joint Genome Institute"/>
            <person name="Copeland A."/>
            <person name="Lucas S."/>
            <person name="Lapidus A."/>
            <person name="Barry K."/>
            <person name="Detter J.C."/>
            <person name="Glavina del Rio T."/>
            <person name="Hammon N."/>
            <person name="Israni S."/>
            <person name="Dalin E."/>
            <person name="Tice H."/>
            <person name="Pitluck S."/>
            <person name="Brettin T."/>
            <person name="Bruce D."/>
            <person name="Han C."/>
            <person name="Tapia R."/>
            <person name="Gilna P."/>
            <person name="Kiss H."/>
            <person name="Schmutz J."/>
            <person name="Larimer F."/>
            <person name="Land M."/>
            <person name="Hauser L."/>
            <person name="Kyrpides N."/>
            <person name="Lykidis A."/>
            <person name="Richardson P."/>
        </authorList>
    </citation>
    <scope>NUCLEOTIDE SEQUENCE [LARGE SCALE GENOMIC DNA]</scope>
    <source>
        <strain>OS217 / ATCC BAA-1090 / DSM 15013</strain>
    </source>
</reference>
<accession>Q12IQ6</accession>
<dbReference type="EMBL" id="CP000302">
    <property type="protein sequence ID" value="ABE56670.1"/>
    <property type="molecule type" value="Genomic_DNA"/>
</dbReference>
<dbReference type="RefSeq" id="WP_011497812.1">
    <property type="nucleotide sequence ID" value="NC_007954.1"/>
</dbReference>
<dbReference type="SMR" id="Q12IQ6"/>
<dbReference type="STRING" id="318161.Sden_3394"/>
<dbReference type="KEGG" id="sdn:Sden_3394"/>
<dbReference type="eggNOG" id="COG3024">
    <property type="taxonomic scope" value="Bacteria"/>
</dbReference>
<dbReference type="HOGENOM" id="CLU_178280_1_0_6"/>
<dbReference type="OrthoDB" id="9809663at2"/>
<dbReference type="Proteomes" id="UP000001982">
    <property type="component" value="Chromosome"/>
</dbReference>
<dbReference type="GO" id="GO:0008657">
    <property type="term" value="F:DNA topoisomerase type II (double strand cut, ATP-hydrolyzing) inhibitor activity"/>
    <property type="evidence" value="ECO:0007669"/>
    <property type="project" value="UniProtKB-UniRule"/>
</dbReference>
<dbReference type="GO" id="GO:0008270">
    <property type="term" value="F:zinc ion binding"/>
    <property type="evidence" value="ECO:0007669"/>
    <property type="project" value="UniProtKB-UniRule"/>
</dbReference>
<dbReference type="GO" id="GO:0006355">
    <property type="term" value="P:regulation of DNA-templated transcription"/>
    <property type="evidence" value="ECO:0007669"/>
    <property type="project" value="InterPro"/>
</dbReference>
<dbReference type="Gene3D" id="3.30.50.10">
    <property type="entry name" value="Erythroid Transcription Factor GATA-1, subunit A"/>
    <property type="match status" value="1"/>
</dbReference>
<dbReference type="HAMAP" id="MF_00649">
    <property type="entry name" value="DNA_gyrase_inhibitor_YacG"/>
    <property type="match status" value="1"/>
</dbReference>
<dbReference type="InterPro" id="IPR005584">
    <property type="entry name" value="DNA_gyrase_inhibitor_YacG"/>
</dbReference>
<dbReference type="InterPro" id="IPR013088">
    <property type="entry name" value="Znf_NHR/GATA"/>
</dbReference>
<dbReference type="PANTHER" id="PTHR36150">
    <property type="entry name" value="DNA GYRASE INHIBITOR YACG"/>
    <property type="match status" value="1"/>
</dbReference>
<dbReference type="PANTHER" id="PTHR36150:SF1">
    <property type="entry name" value="DNA GYRASE INHIBITOR YACG"/>
    <property type="match status" value="1"/>
</dbReference>
<dbReference type="Pfam" id="PF03884">
    <property type="entry name" value="YacG"/>
    <property type="match status" value="1"/>
</dbReference>
<dbReference type="SUPFAM" id="SSF57716">
    <property type="entry name" value="Glucocorticoid receptor-like (DNA-binding domain)"/>
    <property type="match status" value="1"/>
</dbReference>
<sequence length="74" mass="8349">MSLVVQCPICQSSVPWTDDAKFKPFCSERCKLIDLGDWASEKHVIPVKSPFEAGLLDPDLLDDAGFEQDDFFKE</sequence>
<keyword id="KW-0479">Metal-binding</keyword>
<keyword id="KW-1185">Reference proteome</keyword>
<keyword id="KW-0862">Zinc</keyword>
<name>YACG_SHEDO</name>
<evidence type="ECO:0000255" key="1">
    <source>
        <dbReference type="HAMAP-Rule" id="MF_00649"/>
    </source>
</evidence>
<feature type="chain" id="PRO_1000056991" description="DNA gyrase inhibitor YacG">
    <location>
        <begin position="1"/>
        <end position="74"/>
    </location>
</feature>
<feature type="binding site" evidence="1">
    <location>
        <position position="7"/>
    </location>
    <ligand>
        <name>Zn(2+)</name>
        <dbReference type="ChEBI" id="CHEBI:29105"/>
    </ligand>
</feature>
<feature type="binding site" evidence="1">
    <location>
        <position position="10"/>
    </location>
    <ligand>
        <name>Zn(2+)</name>
        <dbReference type="ChEBI" id="CHEBI:29105"/>
    </ligand>
</feature>
<feature type="binding site" evidence="1">
    <location>
        <position position="26"/>
    </location>
    <ligand>
        <name>Zn(2+)</name>
        <dbReference type="ChEBI" id="CHEBI:29105"/>
    </ligand>
</feature>
<feature type="binding site" evidence="1">
    <location>
        <position position="30"/>
    </location>
    <ligand>
        <name>Zn(2+)</name>
        <dbReference type="ChEBI" id="CHEBI:29105"/>
    </ligand>
</feature>
<gene>
    <name evidence="1" type="primary">yacG</name>
    <name type="ordered locus">Sden_3394</name>
</gene>
<organism>
    <name type="scientific">Shewanella denitrificans (strain OS217 / ATCC BAA-1090 / DSM 15013)</name>
    <dbReference type="NCBI Taxonomy" id="318161"/>
    <lineage>
        <taxon>Bacteria</taxon>
        <taxon>Pseudomonadati</taxon>
        <taxon>Pseudomonadota</taxon>
        <taxon>Gammaproteobacteria</taxon>
        <taxon>Alteromonadales</taxon>
        <taxon>Shewanellaceae</taxon>
        <taxon>Shewanella</taxon>
    </lineage>
</organism>